<organism>
    <name type="scientific">Schizosaccharomyces pombe (strain 972 / ATCC 24843)</name>
    <name type="common">Fission yeast</name>
    <dbReference type="NCBI Taxonomy" id="284812"/>
    <lineage>
        <taxon>Eukaryota</taxon>
        <taxon>Fungi</taxon>
        <taxon>Dikarya</taxon>
        <taxon>Ascomycota</taxon>
        <taxon>Taphrinomycotina</taxon>
        <taxon>Schizosaccharomycetes</taxon>
        <taxon>Schizosaccharomycetales</taxon>
        <taxon>Schizosaccharomycetaceae</taxon>
        <taxon>Schizosaccharomyces</taxon>
    </lineage>
</organism>
<protein>
    <recommendedName>
        <fullName evidence="1">Inosine triphosphate pyrophosphatase</fullName>
        <shortName evidence="1">ITPase</shortName>
        <shortName evidence="1">Inosine triphosphatase</shortName>
        <ecNumber evidence="1">3.6.1.66</ecNumber>
    </recommendedName>
    <alternativeName>
        <fullName evidence="1">Non-canonical purine NTP pyrophosphatase</fullName>
    </alternativeName>
    <alternativeName>
        <fullName evidence="1">Non-standard purine NTP pyrophosphatase</fullName>
    </alternativeName>
    <alternativeName>
        <fullName evidence="1">Nucleoside-triphosphate diphosphatase</fullName>
    </alternativeName>
    <alternativeName>
        <fullName evidence="1">Nucleoside-triphosphate pyrophosphatase</fullName>
        <shortName evidence="1">NTPase</shortName>
    </alternativeName>
    <alternativeName>
        <fullName evidence="1">XTP/dITP diphosphatase</fullName>
    </alternativeName>
</protein>
<evidence type="ECO:0000255" key="1">
    <source>
        <dbReference type="HAMAP-Rule" id="MF_03148"/>
    </source>
</evidence>
<evidence type="ECO:0000269" key="2">
    <source>
    </source>
</evidence>
<gene>
    <name type="ORF">SPCC830.10</name>
</gene>
<dbReference type="EC" id="3.6.1.66" evidence="1"/>
<dbReference type="EMBL" id="CU329672">
    <property type="protein sequence ID" value="CAB52883.1"/>
    <property type="molecule type" value="Genomic_DNA"/>
</dbReference>
<dbReference type="PIR" id="T41636">
    <property type="entry name" value="T41636"/>
</dbReference>
<dbReference type="SMR" id="Q9UU89"/>
<dbReference type="BioGRID" id="275607">
    <property type="interactions" value="8"/>
</dbReference>
<dbReference type="FunCoup" id="Q9UU89">
    <property type="interactions" value="725"/>
</dbReference>
<dbReference type="STRING" id="284812.Q9UU89"/>
<dbReference type="iPTMnet" id="Q9UU89"/>
<dbReference type="PaxDb" id="4896-SPCC830.10.1"/>
<dbReference type="EnsemblFungi" id="SPCC830.10.1">
    <property type="protein sequence ID" value="SPCC830.10.1:pep"/>
    <property type="gene ID" value="SPCC830.10"/>
</dbReference>
<dbReference type="KEGG" id="spo:2539034"/>
<dbReference type="PomBase" id="SPCC830.10"/>
<dbReference type="VEuPathDB" id="FungiDB:SPCC830.10"/>
<dbReference type="eggNOG" id="KOG3222">
    <property type="taxonomic scope" value="Eukaryota"/>
</dbReference>
<dbReference type="HOGENOM" id="CLU_082080_1_1_1"/>
<dbReference type="InParanoid" id="Q9UU89"/>
<dbReference type="OMA" id="YDPIFQP"/>
<dbReference type="PhylomeDB" id="Q9UU89"/>
<dbReference type="Reactome" id="R-SPO-74259">
    <property type="pathway name" value="Purine catabolism"/>
</dbReference>
<dbReference type="Reactome" id="R-SPO-9755088">
    <property type="pathway name" value="Ribavirin ADME"/>
</dbReference>
<dbReference type="PRO" id="PR:Q9UU89"/>
<dbReference type="Proteomes" id="UP000002485">
    <property type="component" value="Chromosome III"/>
</dbReference>
<dbReference type="GO" id="GO:0005737">
    <property type="term" value="C:cytoplasm"/>
    <property type="evidence" value="ECO:0000318"/>
    <property type="project" value="GO_Central"/>
</dbReference>
<dbReference type="GO" id="GO:0005829">
    <property type="term" value="C:cytosol"/>
    <property type="evidence" value="ECO:0007005"/>
    <property type="project" value="PomBase"/>
</dbReference>
<dbReference type="GO" id="GO:0005634">
    <property type="term" value="C:nucleus"/>
    <property type="evidence" value="ECO:0007005"/>
    <property type="project" value="PomBase"/>
</dbReference>
<dbReference type="GO" id="GO:0035870">
    <property type="term" value="F:dITP diphosphatase activity"/>
    <property type="evidence" value="ECO:0007669"/>
    <property type="project" value="RHEA"/>
</dbReference>
<dbReference type="GO" id="GO:0036220">
    <property type="term" value="F:ITP diphosphatase activity"/>
    <property type="evidence" value="ECO:0007669"/>
    <property type="project" value="RHEA"/>
</dbReference>
<dbReference type="GO" id="GO:0046872">
    <property type="term" value="F:metal ion binding"/>
    <property type="evidence" value="ECO:0007669"/>
    <property type="project" value="UniProtKB-KW"/>
</dbReference>
<dbReference type="GO" id="GO:0047429">
    <property type="term" value="F:nucleoside triphosphate diphosphatase activity"/>
    <property type="evidence" value="ECO:0000318"/>
    <property type="project" value="GO_Central"/>
</dbReference>
<dbReference type="GO" id="GO:0000166">
    <property type="term" value="F:nucleotide binding"/>
    <property type="evidence" value="ECO:0007669"/>
    <property type="project" value="UniProtKB-KW"/>
</dbReference>
<dbReference type="GO" id="GO:0036222">
    <property type="term" value="F:XTP diphosphatase activity"/>
    <property type="evidence" value="ECO:0007669"/>
    <property type="project" value="RHEA"/>
</dbReference>
<dbReference type="GO" id="GO:1990748">
    <property type="term" value="P:cellular detoxification"/>
    <property type="evidence" value="ECO:0000303"/>
    <property type="project" value="PomBase"/>
</dbReference>
<dbReference type="GO" id="GO:0009204">
    <property type="term" value="P:deoxyribonucleoside triphosphate catabolic process"/>
    <property type="evidence" value="ECO:0007669"/>
    <property type="project" value="UniProtKB-UniRule"/>
</dbReference>
<dbReference type="GO" id="GO:0006974">
    <property type="term" value="P:DNA damage response"/>
    <property type="evidence" value="ECO:0000266"/>
    <property type="project" value="PomBase"/>
</dbReference>
<dbReference type="GO" id="GO:0009143">
    <property type="term" value="P:nucleoside triphosphate catabolic process"/>
    <property type="evidence" value="ECO:0000318"/>
    <property type="project" value="GO_Central"/>
</dbReference>
<dbReference type="GO" id="GO:0009117">
    <property type="term" value="P:nucleotide metabolic process"/>
    <property type="evidence" value="ECO:0007669"/>
    <property type="project" value="UniProtKB-KW"/>
</dbReference>
<dbReference type="CDD" id="cd00515">
    <property type="entry name" value="HAM1"/>
    <property type="match status" value="1"/>
</dbReference>
<dbReference type="FunFam" id="3.90.950.10:FF:000003">
    <property type="entry name" value="Inosine triphosphate pyrophosphatase"/>
    <property type="match status" value="1"/>
</dbReference>
<dbReference type="Gene3D" id="3.90.950.10">
    <property type="match status" value="1"/>
</dbReference>
<dbReference type="HAMAP" id="MF_03148">
    <property type="entry name" value="HAM1_NTPase"/>
    <property type="match status" value="1"/>
</dbReference>
<dbReference type="InterPro" id="IPR027502">
    <property type="entry name" value="ITPase"/>
</dbReference>
<dbReference type="InterPro" id="IPR029001">
    <property type="entry name" value="ITPase-like_fam"/>
</dbReference>
<dbReference type="InterPro" id="IPR002637">
    <property type="entry name" value="RdgB/HAM1"/>
</dbReference>
<dbReference type="PANTHER" id="PTHR11067:SF9">
    <property type="entry name" value="INOSINE TRIPHOSPHATE PYROPHOSPHATASE"/>
    <property type="match status" value="1"/>
</dbReference>
<dbReference type="PANTHER" id="PTHR11067">
    <property type="entry name" value="INOSINE TRIPHOSPHATE PYROPHOSPHATASE/HAM1 PROTEIN"/>
    <property type="match status" value="1"/>
</dbReference>
<dbReference type="Pfam" id="PF01725">
    <property type="entry name" value="Ham1p_like"/>
    <property type="match status" value="1"/>
</dbReference>
<dbReference type="SUPFAM" id="SSF52972">
    <property type="entry name" value="ITPase-like"/>
    <property type="match status" value="1"/>
</dbReference>
<keyword id="KW-0963">Cytoplasm</keyword>
<keyword id="KW-0378">Hydrolase</keyword>
<keyword id="KW-0460">Magnesium</keyword>
<keyword id="KW-0464">Manganese</keyword>
<keyword id="KW-0479">Metal-binding</keyword>
<keyword id="KW-0546">Nucleotide metabolism</keyword>
<keyword id="KW-0547">Nucleotide-binding</keyword>
<keyword id="KW-0539">Nucleus</keyword>
<keyword id="KW-1185">Reference proteome</keyword>
<proteinExistence type="inferred from homology"/>
<name>ITPA_SCHPO</name>
<feature type="chain" id="PRO_0000316234" description="Inosine triphosphate pyrophosphatase">
    <location>
        <begin position="1"/>
        <end position="188"/>
    </location>
</feature>
<feature type="binding site" evidence="1">
    <location>
        <begin position="11"/>
        <end position="16"/>
    </location>
    <ligand>
        <name>ITP</name>
        <dbReference type="ChEBI" id="CHEBI:61402"/>
    </ligand>
</feature>
<feature type="binding site" evidence="1">
    <location>
        <position position="39"/>
    </location>
    <ligand>
        <name>Mg(2+)</name>
        <dbReference type="ChEBI" id="CHEBI:18420"/>
    </ligand>
</feature>
<feature type="binding site" evidence="1">
    <location>
        <position position="51"/>
    </location>
    <ligand>
        <name>ITP</name>
        <dbReference type="ChEBI" id="CHEBI:61402"/>
    </ligand>
</feature>
<feature type="binding site" evidence="1">
    <location>
        <begin position="67"/>
        <end position="68"/>
    </location>
    <ligand>
        <name>ITP</name>
        <dbReference type="ChEBI" id="CHEBI:61402"/>
    </ligand>
</feature>
<feature type="binding site" evidence="1">
    <location>
        <position position="84"/>
    </location>
    <ligand>
        <name>ITP</name>
        <dbReference type="ChEBI" id="CHEBI:61402"/>
    </ligand>
</feature>
<feature type="binding site" evidence="1">
    <location>
        <begin position="143"/>
        <end position="146"/>
    </location>
    <ligand>
        <name>ITP</name>
        <dbReference type="ChEBI" id="CHEBI:61402"/>
    </ligand>
</feature>
<feature type="binding site" evidence="1">
    <location>
        <begin position="171"/>
        <end position="172"/>
    </location>
    <ligand>
        <name>ITP</name>
        <dbReference type="ChEBI" id="CHEBI:61402"/>
    </ligand>
</feature>
<comment type="function">
    <text evidence="1">Pyrophosphatase that hydrolyzes non-canonical purine nucleotides such as inosine triphosphate (ITP), deoxyinosine triphosphate (dITP) or xanthosine 5'-triphosphate (XTP) to their respective monophosphate derivatives. The enzyme does not distinguish between the deoxy- and ribose forms. Probably excludes non-canonical purines from RNA and DNA precursor pools, thus preventing their incorporation into RNA and DNA and avoiding chromosomal lesions.</text>
</comment>
<comment type="catalytic activity">
    <reaction evidence="1">
        <text>ITP + H2O = IMP + diphosphate + H(+)</text>
        <dbReference type="Rhea" id="RHEA:29399"/>
        <dbReference type="ChEBI" id="CHEBI:15377"/>
        <dbReference type="ChEBI" id="CHEBI:15378"/>
        <dbReference type="ChEBI" id="CHEBI:33019"/>
        <dbReference type="ChEBI" id="CHEBI:58053"/>
        <dbReference type="ChEBI" id="CHEBI:61402"/>
        <dbReference type="EC" id="3.6.1.66"/>
    </reaction>
    <physiologicalReaction direction="left-to-right" evidence="1">
        <dbReference type="Rhea" id="RHEA:29400"/>
    </physiologicalReaction>
</comment>
<comment type="catalytic activity">
    <reaction evidence="1">
        <text>dITP + H2O = dIMP + diphosphate + H(+)</text>
        <dbReference type="Rhea" id="RHEA:28342"/>
        <dbReference type="ChEBI" id="CHEBI:15377"/>
        <dbReference type="ChEBI" id="CHEBI:15378"/>
        <dbReference type="ChEBI" id="CHEBI:33019"/>
        <dbReference type="ChEBI" id="CHEBI:61194"/>
        <dbReference type="ChEBI" id="CHEBI:61382"/>
        <dbReference type="EC" id="3.6.1.66"/>
    </reaction>
    <physiologicalReaction direction="left-to-right" evidence="1">
        <dbReference type="Rhea" id="RHEA:28343"/>
    </physiologicalReaction>
</comment>
<comment type="catalytic activity">
    <reaction evidence="1">
        <text>XTP + H2O = XMP + diphosphate + H(+)</text>
        <dbReference type="Rhea" id="RHEA:28610"/>
        <dbReference type="ChEBI" id="CHEBI:15377"/>
        <dbReference type="ChEBI" id="CHEBI:15378"/>
        <dbReference type="ChEBI" id="CHEBI:33019"/>
        <dbReference type="ChEBI" id="CHEBI:57464"/>
        <dbReference type="ChEBI" id="CHEBI:61314"/>
        <dbReference type="EC" id="3.6.1.66"/>
    </reaction>
    <physiologicalReaction direction="left-to-right" evidence="1">
        <dbReference type="Rhea" id="RHEA:28611"/>
    </physiologicalReaction>
</comment>
<comment type="cofactor">
    <cofactor evidence="1">
        <name>Mg(2+)</name>
        <dbReference type="ChEBI" id="CHEBI:18420"/>
    </cofactor>
    <cofactor evidence="1">
        <name>Mn(2+)</name>
        <dbReference type="ChEBI" id="CHEBI:29035"/>
    </cofactor>
    <text evidence="1">Binds 1 divalent metal cation per subunit; can use either Mg(2+) or Mn(2+).</text>
</comment>
<comment type="subunit">
    <text evidence="1">Homodimer.</text>
</comment>
<comment type="subcellular location">
    <subcellularLocation>
        <location evidence="1 2">Cytoplasm</location>
    </subcellularLocation>
    <subcellularLocation>
        <location evidence="1 2">Nucleus</location>
    </subcellularLocation>
</comment>
<comment type="similarity">
    <text evidence="1">Belongs to the HAM1 NTPase family.</text>
</comment>
<reference key="1">
    <citation type="journal article" date="2002" name="Nature">
        <title>The genome sequence of Schizosaccharomyces pombe.</title>
        <authorList>
            <person name="Wood V."/>
            <person name="Gwilliam R."/>
            <person name="Rajandream M.A."/>
            <person name="Lyne M.H."/>
            <person name="Lyne R."/>
            <person name="Stewart A."/>
            <person name="Sgouros J.G."/>
            <person name="Peat N."/>
            <person name="Hayles J."/>
            <person name="Baker S.G."/>
            <person name="Basham D."/>
            <person name="Bowman S."/>
            <person name="Brooks K."/>
            <person name="Brown D."/>
            <person name="Brown S."/>
            <person name="Chillingworth T."/>
            <person name="Churcher C.M."/>
            <person name="Collins M."/>
            <person name="Connor R."/>
            <person name="Cronin A."/>
            <person name="Davis P."/>
            <person name="Feltwell T."/>
            <person name="Fraser A."/>
            <person name="Gentles S."/>
            <person name="Goble A."/>
            <person name="Hamlin N."/>
            <person name="Harris D.E."/>
            <person name="Hidalgo J."/>
            <person name="Hodgson G."/>
            <person name="Holroyd S."/>
            <person name="Hornsby T."/>
            <person name="Howarth S."/>
            <person name="Huckle E.J."/>
            <person name="Hunt S."/>
            <person name="Jagels K."/>
            <person name="James K.D."/>
            <person name="Jones L."/>
            <person name="Jones M."/>
            <person name="Leather S."/>
            <person name="McDonald S."/>
            <person name="McLean J."/>
            <person name="Mooney P."/>
            <person name="Moule S."/>
            <person name="Mungall K.L."/>
            <person name="Murphy L.D."/>
            <person name="Niblett D."/>
            <person name="Odell C."/>
            <person name="Oliver K."/>
            <person name="O'Neil S."/>
            <person name="Pearson D."/>
            <person name="Quail M.A."/>
            <person name="Rabbinowitsch E."/>
            <person name="Rutherford K.M."/>
            <person name="Rutter S."/>
            <person name="Saunders D."/>
            <person name="Seeger K."/>
            <person name="Sharp S."/>
            <person name="Skelton J."/>
            <person name="Simmonds M.N."/>
            <person name="Squares R."/>
            <person name="Squares S."/>
            <person name="Stevens K."/>
            <person name="Taylor K."/>
            <person name="Taylor R.G."/>
            <person name="Tivey A."/>
            <person name="Walsh S.V."/>
            <person name="Warren T."/>
            <person name="Whitehead S."/>
            <person name="Woodward J.R."/>
            <person name="Volckaert G."/>
            <person name="Aert R."/>
            <person name="Robben J."/>
            <person name="Grymonprez B."/>
            <person name="Weltjens I."/>
            <person name="Vanstreels E."/>
            <person name="Rieger M."/>
            <person name="Schaefer M."/>
            <person name="Mueller-Auer S."/>
            <person name="Gabel C."/>
            <person name="Fuchs M."/>
            <person name="Duesterhoeft A."/>
            <person name="Fritzc C."/>
            <person name="Holzer E."/>
            <person name="Moestl D."/>
            <person name="Hilbert H."/>
            <person name="Borzym K."/>
            <person name="Langer I."/>
            <person name="Beck A."/>
            <person name="Lehrach H."/>
            <person name="Reinhardt R."/>
            <person name="Pohl T.M."/>
            <person name="Eger P."/>
            <person name="Zimmermann W."/>
            <person name="Wedler H."/>
            <person name="Wambutt R."/>
            <person name="Purnelle B."/>
            <person name="Goffeau A."/>
            <person name="Cadieu E."/>
            <person name="Dreano S."/>
            <person name="Gloux S."/>
            <person name="Lelaure V."/>
            <person name="Mottier S."/>
            <person name="Galibert F."/>
            <person name="Aves S.J."/>
            <person name="Xiang Z."/>
            <person name="Hunt C."/>
            <person name="Moore K."/>
            <person name="Hurst S.M."/>
            <person name="Lucas M."/>
            <person name="Rochet M."/>
            <person name="Gaillardin C."/>
            <person name="Tallada V.A."/>
            <person name="Garzon A."/>
            <person name="Thode G."/>
            <person name="Daga R.R."/>
            <person name="Cruzado L."/>
            <person name="Jimenez J."/>
            <person name="Sanchez M."/>
            <person name="del Rey F."/>
            <person name="Benito J."/>
            <person name="Dominguez A."/>
            <person name="Revuelta J.L."/>
            <person name="Moreno S."/>
            <person name="Armstrong J."/>
            <person name="Forsburg S.L."/>
            <person name="Cerutti L."/>
            <person name="Lowe T."/>
            <person name="McCombie W.R."/>
            <person name="Paulsen I."/>
            <person name="Potashkin J."/>
            <person name="Shpakovski G.V."/>
            <person name="Ussery D."/>
            <person name="Barrell B.G."/>
            <person name="Nurse P."/>
        </authorList>
    </citation>
    <scope>NUCLEOTIDE SEQUENCE [LARGE SCALE GENOMIC DNA]</scope>
    <source>
        <strain>972 / ATCC 24843</strain>
    </source>
</reference>
<reference key="2">
    <citation type="journal article" date="2006" name="Nat. Biotechnol.">
        <title>ORFeome cloning and global analysis of protein localization in the fission yeast Schizosaccharomyces pombe.</title>
        <authorList>
            <person name="Matsuyama A."/>
            <person name="Arai R."/>
            <person name="Yashiroda Y."/>
            <person name="Shirai A."/>
            <person name="Kamata A."/>
            <person name="Sekido S."/>
            <person name="Kobayashi Y."/>
            <person name="Hashimoto A."/>
            <person name="Hamamoto M."/>
            <person name="Hiraoka Y."/>
            <person name="Horinouchi S."/>
            <person name="Yoshida M."/>
        </authorList>
    </citation>
    <scope>SUBCELLULAR LOCATION [LARGE SCALE ANALYSIS]</scope>
</reference>
<accession>Q9UU89</accession>
<sequence>MTILQSILFVTGNKHKLADVKNILGDRFEIKNHDYDLPEIQGSVKEVVLEKCKAAAEIVKGPVLVEDTWLGYKAMNGLPGPYVKWFLNSVGPDGLYRMVSAFDTKEAQAGCTFGYTKGPGKPIHLFEGILDGQVVPPRGSNGFGWNSIFQPNGHKHTYAEMTDEERNSCSHRYLAAMKLRDFLESEKN</sequence>